<reference key="1">
    <citation type="journal article" date="2004" name="Biochem. Biophys. Res. Commun.">
        <title>Molecular cloning, characterization, and expression in brain and gonad of Dmrt5 of zebrafish.</title>
        <authorList>
            <person name="Guo Y."/>
            <person name="Li Q."/>
            <person name="Gao S."/>
            <person name="Zhou X."/>
            <person name="He Y."/>
            <person name="Shang X."/>
            <person name="Cheng H."/>
            <person name="Zhou R."/>
        </authorList>
    </citation>
    <scope>NUCLEOTIDE SEQUENCE [MRNA]</scope>
    <scope>TISSUE SPECIFICITY</scope>
    <scope>DEVELOPMENTAL STAGE</scope>
</reference>
<dbReference type="EMBL" id="AY618549">
    <property type="protein sequence ID" value="AAU85258.1"/>
    <property type="molecule type" value="mRNA"/>
</dbReference>
<dbReference type="SMR" id="Q5UU75"/>
<dbReference type="FunCoup" id="Q5UU75">
    <property type="interactions" value="705"/>
</dbReference>
<dbReference type="STRING" id="7955.ENSDARP00000057589"/>
<dbReference type="PaxDb" id="7955-ENSDARP00000057589"/>
<dbReference type="AGR" id="ZFIN:ZDB-GENE-041116-2"/>
<dbReference type="ZFIN" id="ZDB-GENE-041116-2">
    <property type="gene designation" value="dmrta2"/>
</dbReference>
<dbReference type="eggNOG" id="KOG3815">
    <property type="taxonomic scope" value="Eukaryota"/>
</dbReference>
<dbReference type="InParanoid" id="Q5UU75"/>
<dbReference type="PhylomeDB" id="Q5UU75"/>
<dbReference type="PRO" id="PR:Q5UU75"/>
<dbReference type="Proteomes" id="UP000000437">
    <property type="component" value="Unplaced"/>
</dbReference>
<dbReference type="GO" id="GO:0005634">
    <property type="term" value="C:nucleus"/>
    <property type="evidence" value="ECO:0000318"/>
    <property type="project" value="GO_Central"/>
</dbReference>
<dbReference type="GO" id="GO:0000981">
    <property type="term" value="F:DNA-binding transcription factor activity, RNA polymerase II-specific"/>
    <property type="evidence" value="ECO:0000318"/>
    <property type="project" value="GO_Central"/>
</dbReference>
<dbReference type="GO" id="GO:0046872">
    <property type="term" value="F:metal ion binding"/>
    <property type="evidence" value="ECO:0007669"/>
    <property type="project" value="UniProtKB-KW"/>
</dbReference>
<dbReference type="GO" id="GO:0000978">
    <property type="term" value="F:RNA polymerase II cis-regulatory region sequence-specific DNA binding"/>
    <property type="evidence" value="ECO:0000318"/>
    <property type="project" value="GO_Central"/>
</dbReference>
<dbReference type="GO" id="GO:0060128">
    <property type="term" value="P:corticotropin hormone secreting cell differentiation"/>
    <property type="evidence" value="ECO:0000315"/>
    <property type="project" value="ZFIN"/>
</dbReference>
<dbReference type="GO" id="GO:0006357">
    <property type="term" value="P:regulation of transcription by RNA polymerase II"/>
    <property type="evidence" value="ECO:0000318"/>
    <property type="project" value="GO_Central"/>
</dbReference>
<dbReference type="GO" id="GO:0007548">
    <property type="term" value="P:sex differentiation"/>
    <property type="evidence" value="ECO:0000318"/>
    <property type="project" value="GO_Central"/>
</dbReference>
<dbReference type="GO" id="GO:0021537">
    <property type="term" value="P:telencephalon development"/>
    <property type="evidence" value="ECO:0000315"/>
    <property type="project" value="ZFIN"/>
</dbReference>
<dbReference type="CDD" id="cd14418">
    <property type="entry name" value="CUE_DMA_DMRTA2"/>
    <property type="match status" value="1"/>
</dbReference>
<dbReference type="FunFam" id="4.10.1040.10:FF:000001">
    <property type="entry name" value="doublesex- and mab-3-related transcription factor 1"/>
    <property type="match status" value="1"/>
</dbReference>
<dbReference type="Gene3D" id="4.10.1040.10">
    <property type="entry name" value="DM DNA-binding domain"/>
    <property type="match status" value="1"/>
</dbReference>
<dbReference type="Gene3D" id="1.10.8.10">
    <property type="entry name" value="DNA helicase RuvA subunit, C-terminal domain"/>
    <property type="match status" value="1"/>
</dbReference>
<dbReference type="InterPro" id="IPR001275">
    <property type="entry name" value="DM_DNA-bd"/>
</dbReference>
<dbReference type="InterPro" id="IPR036407">
    <property type="entry name" value="DM_DNA-bd_sf"/>
</dbReference>
<dbReference type="InterPro" id="IPR005173">
    <property type="entry name" value="DMA"/>
</dbReference>
<dbReference type="InterPro" id="IPR026607">
    <property type="entry name" value="DMRT"/>
</dbReference>
<dbReference type="InterPro" id="IPR046472">
    <property type="entry name" value="DMRT5_1_DMB_dom"/>
</dbReference>
<dbReference type="InterPro" id="IPR009060">
    <property type="entry name" value="UBA-like_sf"/>
</dbReference>
<dbReference type="PANTHER" id="PTHR12322">
    <property type="entry name" value="DOUBLESEX AND MAB-3 RELATED TRANSCRIPTION FACTOR DMRT"/>
    <property type="match status" value="1"/>
</dbReference>
<dbReference type="PANTHER" id="PTHR12322:SF76">
    <property type="entry name" value="DOUBLESEX- AND MAB-3-RELATED TRANSCRIPTION FACTOR A2"/>
    <property type="match status" value="1"/>
</dbReference>
<dbReference type="Pfam" id="PF00751">
    <property type="entry name" value="DM"/>
    <property type="match status" value="1"/>
</dbReference>
<dbReference type="Pfam" id="PF03474">
    <property type="entry name" value="DMA"/>
    <property type="match status" value="1"/>
</dbReference>
<dbReference type="Pfam" id="PF20624">
    <property type="entry name" value="DMRT5_DMB"/>
    <property type="match status" value="1"/>
</dbReference>
<dbReference type="SMART" id="SM00301">
    <property type="entry name" value="DM"/>
    <property type="match status" value="1"/>
</dbReference>
<dbReference type="SUPFAM" id="SSF82927">
    <property type="entry name" value="Cysteine-rich DNA binding domain, (DM domain)"/>
    <property type="match status" value="1"/>
</dbReference>
<dbReference type="SUPFAM" id="SSF46934">
    <property type="entry name" value="UBA-like"/>
    <property type="match status" value="1"/>
</dbReference>
<dbReference type="PROSITE" id="PS40000">
    <property type="entry name" value="DM_1"/>
    <property type="match status" value="1"/>
</dbReference>
<dbReference type="PROSITE" id="PS50809">
    <property type="entry name" value="DM_2"/>
    <property type="match status" value="1"/>
</dbReference>
<sequence length="440" mass="47333">MDLRPEIPPASQAGSQVHPGAAAAAAAAASIPVSMAGSLLRAPPLLLRATEKYPRTPKCARCRNHGVVSALKGHKRYCRWKDCMCAKCTLIAERQRVMAAQVALRRQQAQEENEARELQLLYGTAEGLALAAANGIIPPRQNYEVFGPVSNESNSGESNIQKFELFPKTPLPGTVTPHQAAGKSVSTDTESVPGMSSPDMRHGSGSENGDRESIVSSPIAKPLKDGEETPGSISPIGSDSGSDTDKDEQEPSPSSAASRQMNAIDILTRVFPNHKRSVLELVLQGCGKNVVQAIEQILNNSGQAKGPEETWTAERMLQSVQPTMSSTPRPMLPGTMTLSNRSAFSPLQPNAPHFGSDPSTYPLSTHLGLNPLRLAYSAHSRGLAFMAPYSTTGLMPTLGFRPPMDYAFSDLIRDRTLLHKDQSYTNGLYGPLVNNTQEKQ</sequence>
<keyword id="KW-0238">DNA-binding</keyword>
<keyword id="KW-0479">Metal-binding</keyword>
<keyword id="KW-0539">Nucleus</keyword>
<keyword id="KW-1185">Reference proteome</keyword>
<keyword id="KW-0862">Zinc</keyword>
<feature type="chain" id="PRO_0000333774" description="Doublesex- and mab-3-related transcription factor A2">
    <location>
        <begin position="1"/>
        <end position="440"/>
    </location>
</feature>
<feature type="domain" description="DMA" evidence="1">
    <location>
        <begin position="261"/>
        <end position="296"/>
    </location>
</feature>
<feature type="DNA-binding region" description="DM" evidence="2">
    <location>
        <begin position="59"/>
        <end position="106"/>
    </location>
</feature>
<feature type="region of interest" description="Disordered" evidence="3">
    <location>
        <begin position="167"/>
        <end position="261"/>
    </location>
</feature>
<feature type="compositionally biased region" description="Basic and acidic residues" evidence="3">
    <location>
        <begin position="199"/>
        <end position="213"/>
    </location>
</feature>
<feature type="compositionally biased region" description="Low complexity" evidence="3">
    <location>
        <begin position="229"/>
        <end position="241"/>
    </location>
</feature>
<feature type="compositionally biased region" description="Polar residues" evidence="3">
    <location>
        <begin position="251"/>
        <end position="261"/>
    </location>
</feature>
<gene>
    <name type="primary">dmrta2</name>
    <name type="synonym">dmrt5</name>
</gene>
<name>DMTA2_DANRE</name>
<accession>Q5UU75</accession>
<comment type="function">
    <text>May be involved in sexual development.</text>
</comment>
<comment type="subcellular location">
    <subcellularLocation>
        <location evidence="2">Nucleus</location>
    </subcellularLocation>
</comment>
<comment type="tissue specificity">
    <text evidence="4">Restrictively expressed in brain and developing germ cells, especially in spermatogonia, spermatocytes, spermatids, and sperm cells, and in developing oocytes, including early perinucleolus stage oocyte, late yolk vesicle stage oocyte, and oil drop stage oocyte.</text>
</comment>
<comment type="developmental stage">
    <text evidence="4">Expressed in early gastrula period, subsequently increases to a high level in late stage of gastrula period (bud stage) and lowers until the hatch period. Expressed in developing central nervous system of embryos, especially in mid-brain and mid-hind brain boundary. Seems to be restricted in central nervous system, especially in mid-brain and mid-hind brain boundary.</text>
</comment>
<comment type="similarity">
    <text evidence="5">Belongs to the DMRT family.</text>
</comment>
<protein>
    <recommendedName>
        <fullName>Doublesex- and mab-3-related transcription factor A2</fullName>
    </recommendedName>
    <alternativeName>
        <fullName>Doublesex- and mab-3-related transcription factor 5</fullName>
    </alternativeName>
</protein>
<proteinExistence type="evidence at transcript level"/>
<evidence type="ECO:0000255" key="1"/>
<evidence type="ECO:0000255" key="2">
    <source>
        <dbReference type="PROSITE-ProRule" id="PRU00070"/>
    </source>
</evidence>
<evidence type="ECO:0000256" key="3">
    <source>
        <dbReference type="SAM" id="MobiDB-lite"/>
    </source>
</evidence>
<evidence type="ECO:0000269" key="4">
    <source>
    </source>
</evidence>
<evidence type="ECO:0000305" key="5"/>
<organism>
    <name type="scientific">Danio rerio</name>
    <name type="common">Zebrafish</name>
    <name type="synonym">Brachydanio rerio</name>
    <dbReference type="NCBI Taxonomy" id="7955"/>
    <lineage>
        <taxon>Eukaryota</taxon>
        <taxon>Metazoa</taxon>
        <taxon>Chordata</taxon>
        <taxon>Craniata</taxon>
        <taxon>Vertebrata</taxon>
        <taxon>Euteleostomi</taxon>
        <taxon>Actinopterygii</taxon>
        <taxon>Neopterygii</taxon>
        <taxon>Teleostei</taxon>
        <taxon>Ostariophysi</taxon>
        <taxon>Cypriniformes</taxon>
        <taxon>Danionidae</taxon>
        <taxon>Danioninae</taxon>
        <taxon>Danio</taxon>
    </lineage>
</organism>